<protein>
    <recommendedName>
        <fullName evidence="1">PF03932 family protein CutC</fullName>
    </recommendedName>
</protein>
<feature type="chain" id="PRO_0000215067" description="PF03932 family protein CutC">
    <location>
        <begin position="1"/>
        <end position="252"/>
    </location>
</feature>
<dbReference type="EMBL" id="BX950851">
    <property type="protein sequence ID" value="CAG75417.1"/>
    <property type="molecule type" value="Genomic_DNA"/>
</dbReference>
<dbReference type="RefSeq" id="WP_011094063.1">
    <property type="nucleotide sequence ID" value="NC_004547.2"/>
</dbReference>
<dbReference type="SMR" id="Q6D476"/>
<dbReference type="STRING" id="218491.ECA2518"/>
<dbReference type="GeneID" id="57208786"/>
<dbReference type="KEGG" id="eca:ECA2518"/>
<dbReference type="PATRIC" id="fig|218491.5.peg.2547"/>
<dbReference type="eggNOG" id="COG3142">
    <property type="taxonomic scope" value="Bacteria"/>
</dbReference>
<dbReference type="HOGENOM" id="CLU_050555_3_1_6"/>
<dbReference type="OrthoDB" id="9815677at2"/>
<dbReference type="Proteomes" id="UP000007966">
    <property type="component" value="Chromosome"/>
</dbReference>
<dbReference type="GO" id="GO:0005737">
    <property type="term" value="C:cytoplasm"/>
    <property type="evidence" value="ECO:0007669"/>
    <property type="project" value="UniProtKB-SubCell"/>
</dbReference>
<dbReference type="GO" id="GO:0005507">
    <property type="term" value="F:copper ion binding"/>
    <property type="evidence" value="ECO:0007669"/>
    <property type="project" value="TreeGrafter"/>
</dbReference>
<dbReference type="FunFam" id="3.20.20.380:FF:000001">
    <property type="entry name" value="Copper homeostasis protein CutC"/>
    <property type="match status" value="1"/>
</dbReference>
<dbReference type="Gene3D" id="3.20.20.380">
    <property type="entry name" value="Copper homeostasis (CutC) domain"/>
    <property type="match status" value="1"/>
</dbReference>
<dbReference type="HAMAP" id="MF_00795">
    <property type="entry name" value="CutC"/>
    <property type="match status" value="1"/>
</dbReference>
<dbReference type="InterPro" id="IPR005627">
    <property type="entry name" value="CutC-like"/>
</dbReference>
<dbReference type="InterPro" id="IPR036822">
    <property type="entry name" value="CutC-like_dom_sf"/>
</dbReference>
<dbReference type="NCBIfam" id="NF008603">
    <property type="entry name" value="PRK11572.1"/>
    <property type="match status" value="1"/>
</dbReference>
<dbReference type="PANTHER" id="PTHR12598">
    <property type="entry name" value="COPPER HOMEOSTASIS PROTEIN CUTC"/>
    <property type="match status" value="1"/>
</dbReference>
<dbReference type="PANTHER" id="PTHR12598:SF0">
    <property type="entry name" value="COPPER HOMEOSTASIS PROTEIN CUTC HOMOLOG"/>
    <property type="match status" value="1"/>
</dbReference>
<dbReference type="Pfam" id="PF03932">
    <property type="entry name" value="CutC"/>
    <property type="match status" value="1"/>
</dbReference>
<dbReference type="SUPFAM" id="SSF110395">
    <property type="entry name" value="CutC-like"/>
    <property type="match status" value="1"/>
</dbReference>
<reference key="1">
    <citation type="journal article" date="2004" name="Proc. Natl. Acad. Sci. U.S.A.">
        <title>Genome sequence of the enterobacterial phytopathogen Erwinia carotovora subsp. atroseptica and characterization of virulence factors.</title>
        <authorList>
            <person name="Bell K.S."/>
            <person name="Sebaihia M."/>
            <person name="Pritchard L."/>
            <person name="Holden M.T.G."/>
            <person name="Hyman L.J."/>
            <person name="Holeva M.C."/>
            <person name="Thomson N.R."/>
            <person name="Bentley S.D."/>
            <person name="Churcher L.J.C."/>
            <person name="Mungall K."/>
            <person name="Atkin R."/>
            <person name="Bason N."/>
            <person name="Brooks K."/>
            <person name="Chillingworth T."/>
            <person name="Clark K."/>
            <person name="Doggett J."/>
            <person name="Fraser A."/>
            <person name="Hance Z."/>
            <person name="Hauser H."/>
            <person name="Jagels K."/>
            <person name="Moule S."/>
            <person name="Norbertczak H."/>
            <person name="Ormond D."/>
            <person name="Price C."/>
            <person name="Quail M.A."/>
            <person name="Sanders M."/>
            <person name="Walker D."/>
            <person name="Whitehead S."/>
            <person name="Salmond G.P.C."/>
            <person name="Birch P.R.J."/>
            <person name="Parkhill J."/>
            <person name="Toth I.K."/>
        </authorList>
    </citation>
    <scope>NUCLEOTIDE SEQUENCE [LARGE SCALE GENOMIC DNA]</scope>
    <source>
        <strain>SCRI 1043 / ATCC BAA-672</strain>
    </source>
</reference>
<comment type="subcellular location">
    <subcellularLocation>
        <location evidence="1">Cytoplasm</location>
    </subcellularLocation>
</comment>
<comment type="similarity">
    <text evidence="1">Belongs to the CutC family.</text>
</comment>
<comment type="caution">
    <text evidence="1">Once thought to be involved in copper homeostasis, experiments in E.coli have shown this is not the case.</text>
</comment>
<evidence type="ECO:0000255" key="1">
    <source>
        <dbReference type="HAMAP-Rule" id="MF_00795"/>
    </source>
</evidence>
<organism>
    <name type="scientific">Pectobacterium atrosepticum (strain SCRI 1043 / ATCC BAA-672)</name>
    <name type="common">Erwinia carotovora subsp. atroseptica</name>
    <dbReference type="NCBI Taxonomy" id="218491"/>
    <lineage>
        <taxon>Bacteria</taxon>
        <taxon>Pseudomonadati</taxon>
        <taxon>Pseudomonadota</taxon>
        <taxon>Gammaproteobacteria</taxon>
        <taxon>Enterobacterales</taxon>
        <taxon>Pectobacteriaceae</taxon>
        <taxon>Pectobacterium</taxon>
    </lineage>
</organism>
<sequence>MTKLEVCCYSVDCAITAAQSGADRIELCAGQREGGLTPSYGALRGAREKIAIPVHPIVRPRGGDFCYNATEFAAIKYDIEQVREMGFPGVVVGALNEEGHIDLPKMREIMAVAQGMAVTFHRAFDMCLNPYIALEQLTDLGVSRILSSGQQQTAENGLRLLRELTQASRGPIIMAGSGVRLTNVHKFQQAGIRELHSSAGQWTSSPMRYRKIGVSMCSDTELDEFSQYCVDGDVVEAMKRAVSPDREMQYVS</sequence>
<accession>Q6D476</accession>
<gene>
    <name evidence="1" type="primary">cutC</name>
    <name type="ordered locus">ECA2518</name>
</gene>
<proteinExistence type="inferred from homology"/>
<name>CUTC_PECAS</name>
<keyword id="KW-0963">Cytoplasm</keyword>
<keyword id="KW-1185">Reference proteome</keyword>